<protein>
    <recommendedName>
        <fullName>EF-hand calcium-binding domain-containing protein 2</fullName>
    </recommendedName>
</protein>
<evidence type="ECO:0000255" key="1"/>
<evidence type="ECO:0000255" key="2">
    <source>
        <dbReference type="PROSITE-ProRule" id="PRU10142"/>
    </source>
</evidence>
<evidence type="ECO:0000269" key="3">
    <source>
    </source>
</evidence>
<evidence type="ECO:0000269" key="4">
    <source ref="1"/>
</evidence>
<evidence type="ECO:0000305" key="5"/>
<reference evidence="5" key="1">
    <citation type="submission" date="2007-12" db="EMBL/GenBank/DDBJ databases">
        <title>DOE Joint Genome Institute Lottia gigantea EST project.</title>
        <authorList>
            <person name="Richardson P."/>
            <person name="Lucas S."/>
            <person name="Rokhsar D."/>
            <person name="Wang M."/>
            <person name="Lindquist E.A."/>
        </authorList>
    </citation>
    <scope>NUCLEOTIDE SEQUENCE [LARGE SCALE MRNA]</scope>
    <scope>IDENTIFICATION</scope>
    <source>
        <tissue evidence="4">Mantle</tissue>
    </source>
</reference>
<reference key="2">
    <citation type="journal article" date="2013" name="FEBS J.">
        <title>The shell-forming proteome of Lottia gigantea reveals both deep conservations and lineage-specific novelties.</title>
        <authorList>
            <person name="Marie B."/>
            <person name="Jackson D.J."/>
            <person name="Ramos-Silva P."/>
            <person name="Zanella-Cleon I."/>
            <person name="Guichard N."/>
            <person name="Marin F."/>
        </authorList>
    </citation>
    <scope>PROTEIN SEQUENCE OF 62-77</scope>
    <scope>SUBCELLULAR LOCATION</scope>
    <scope>TISSUE SPECIFICITY</scope>
    <source>
        <tissue>Shell</tissue>
    </source>
</reference>
<accession>B3A0R9</accession>
<sequence length="119" mass="13305">MKVAVVLIVVLVVMMIGQETDSWRIRIRRGRKIFRKIRPYIPFVIGAVGKRQAGDAEFQAKYNAAAEDGVFTDEEIKSVFGVDDNGFVEFKATYDVDGDGVVQVEEYETVVELTENLAG</sequence>
<dbReference type="EMBL" id="FC621971">
    <property type="status" value="NOT_ANNOTATED_CDS"/>
    <property type="molecule type" value="mRNA"/>
</dbReference>
<dbReference type="RefSeq" id="XP_009051062.1">
    <property type="nucleotide sequence ID" value="XM_009052814.1"/>
</dbReference>
<dbReference type="EnsemblMetazoa" id="LotgiT231427">
    <property type="protein sequence ID" value="LotgiP231427"/>
    <property type="gene ID" value="LotgiG231427"/>
</dbReference>
<dbReference type="GeneID" id="20248583"/>
<dbReference type="KEGG" id="lgi:LOTGIDRAFT_231427"/>
<dbReference type="CTD" id="20248583"/>
<dbReference type="HOGENOM" id="CLU_139961_0_0_1"/>
<dbReference type="GO" id="GO:0005576">
    <property type="term" value="C:extracellular region"/>
    <property type="evidence" value="ECO:0007669"/>
    <property type="project" value="UniProtKB-SubCell"/>
</dbReference>
<dbReference type="GO" id="GO:0046872">
    <property type="term" value="F:metal ion binding"/>
    <property type="evidence" value="ECO:0007669"/>
    <property type="project" value="UniProtKB-KW"/>
</dbReference>
<dbReference type="InterPro" id="IPR018247">
    <property type="entry name" value="EF_Hand_1_Ca_BS"/>
</dbReference>
<dbReference type="PROSITE" id="PS00018">
    <property type="entry name" value="EF_HAND_1"/>
    <property type="match status" value="1"/>
</dbReference>
<proteinExistence type="evidence at protein level"/>
<organism>
    <name type="scientific">Lottia gigantea</name>
    <name type="common">Giant owl limpet</name>
    <dbReference type="NCBI Taxonomy" id="225164"/>
    <lineage>
        <taxon>Eukaryota</taxon>
        <taxon>Metazoa</taxon>
        <taxon>Spiralia</taxon>
        <taxon>Lophotrochozoa</taxon>
        <taxon>Mollusca</taxon>
        <taxon>Gastropoda</taxon>
        <taxon>Patellogastropoda</taxon>
        <taxon>Lottioidea</taxon>
        <taxon>Lottiidae</taxon>
        <taxon>Lottia</taxon>
    </lineage>
</organism>
<feature type="signal peptide" evidence="1">
    <location>
        <begin position="1"/>
        <end position="22"/>
    </location>
</feature>
<feature type="chain" id="PRO_0000415256" description="EF-hand calcium-binding domain-containing protein 2" evidence="1">
    <location>
        <begin position="23"/>
        <end position="119"/>
    </location>
</feature>
<feature type="domain" description="EF-hand" evidence="1">
    <location>
        <begin position="82"/>
        <end position="117"/>
    </location>
</feature>
<feature type="binding site" evidence="2">
    <location>
        <position position="95"/>
    </location>
    <ligand>
        <name>Ca(2+)</name>
        <dbReference type="ChEBI" id="CHEBI:29108"/>
    </ligand>
</feature>
<feature type="binding site" evidence="2">
    <location>
        <position position="97"/>
    </location>
    <ligand>
        <name>Ca(2+)</name>
        <dbReference type="ChEBI" id="CHEBI:29108"/>
    </ligand>
</feature>
<feature type="binding site" evidence="2">
    <location>
        <position position="99"/>
    </location>
    <ligand>
        <name>Ca(2+)</name>
        <dbReference type="ChEBI" id="CHEBI:29108"/>
    </ligand>
</feature>
<feature type="binding site" evidence="2">
    <location>
        <position position="106"/>
    </location>
    <ligand>
        <name>Ca(2+)</name>
        <dbReference type="ChEBI" id="CHEBI:29108"/>
    </ligand>
</feature>
<name>EFCB2_LOTGI</name>
<keyword id="KW-0106">Calcium</keyword>
<keyword id="KW-0903">Direct protein sequencing</keyword>
<keyword id="KW-0479">Metal-binding</keyword>
<keyword id="KW-0964">Secreted</keyword>
<keyword id="KW-0732">Signal</keyword>
<comment type="subcellular location">
    <subcellularLocation>
        <location evidence="3">Secreted</location>
    </subcellularLocation>
</comment>
<comment type="tissue specificity">
    <text evidence="3">Component of the acid-soluble organic matrix of calcified layers of the shell (at protein level).</text>
</comment>